<comment type="function">
    <text>Involved in the regulation of the raffinose-operon.</text>
</comment>
<feature type="chain" id="PRO_0000194548" description="Raffinose operon transcriptional regulatory protein RafR">
    <location>
        <begin position="1"/>
        <end position="277"/>
    </location>
</feature>
<feature type="domain" description="HTH araC/xylS-type" evidence="1">
    <location>
        <begin position="176"/>
        <end position="274"/>
    </location>
</feature>
<feature type="DNA-binding region" description="H-T-H motif" evidence="1">
    <location>
        <begin position="193"/>
        <end position="214"/>
    </location>
</feature>
<feature type="DNA-binding region" description="H-T-H motif" evidence="1">
    <location>
        <begin position="241"/>
        <end position="264"/>
    </location>
</feature>
<dbReference type="EMBL" id="Z32771">
    <property type="protein sequence ID" value="CAA83663.1"/>
    <property type="molecule type" value="Genomic_DNA"/>
</dbReference>
<dbReference type="EMBL" id="L32093">
    <property type="protein sequence ID" value="AAA25562.1"/>
    <property type="molecule type" value="Genomic_DNA"/>
</dbReference>
<dbReference type="PIR" id="S44252">
    <property type="entry name" value="S44252"/>
</dbReference>
<dbReference type="SMR" id="P43465"/>
<dbReference type="GO" id="GO:0003700">
    <property type="term" value="F:DNA-binding transcription factor activity"/>
    <property type="evidence" value="ECO:0007669"/>
    <property type="project" value="InterPro"/>
</dbReference>
<dbReference type="GO" id="GO:0043565">
    <property type="term" value="F:sequence-specific DNA binding"/>
    <property type="evidence" value="ECO:0007669"/>
    <property type="project" value="InterPro"/>
</dbReference>
<dbReference type="CDD" id="cd06986">
    <property type="entry name" value="cupin_MmsR-like_N"/>
    <property type="match status" value="1"/>
</dbReference>
<dbReference type="Gene3D" id="1.10.10.60">
    <property type="entry name" value="Homeodomain-like"/>
    <property type="match status" value="2"/>
</dbReference>
<dbReference type="Gene3D" id="2.60.120.280">
    <property type="entry name" value="Regulatory protein AraC"/>
    <property type="match status" value="1"/>
</dbReference>
<dbReference type="InterPro" id="IPR003313">
    <property type="entry name" value="AraC-bd"/>
</dbReference>
<dbReference type="InterPro" id="IPR009057">
    <property type="entry name" value="Homeodomain-like_sf"/>
</dbReference>
<dbReference type="InterPro" id="IPR037923">
    <property type="entry name" value="HTH-like"/>
</dbReference>
<dbReference type="InterPro" id="IPR018060">
    <property type="entry name" value="HTH_AraC"/>
</dbReference>
<dbReference type="InterPro" id="IPR018062">
    <property type="entry name" value="HTH_AraC-typ_CS"/>
</dbReference>
<dbReference type="InterPro" id="IPR020449">
    <property type="entry name" value="Tscrpt_reg_AraC-type_HTH"/>
</dbReference>
<dbReference type="PANTHER" id="PTHR43280">
    <property type="entry name" value="ARAC-FAMILY TRANSCRIPTIONAL REGULATOR"/>
    <property type="match status" value="1"/>
</dbReference>
<dbReference type="PANTHER" id="PTHR43280:SF30">
    <property type="entry name" value="MMSAB OPERON REGULATORY PROTEIN"/>
    <property type="match status" value="1"/>
</dbReference>
<dbReference type="Pfam" id="PF02311">
    <property type="entry name" value="AraC_binding"/>
    <property type="match status" value="1"/>
</dbReference>
<dbReference type="Pfam" id="PF12833">
    <property type="entry name" value="HTH_18"/>
    <property type="match status" value="1"/>
</dbReference>
<dbReference type="PRINTS" id="PR00032">
    <property type="entry name" value="HTHARAC"/>
</dbReference>
<dbReference type="SMART" id="SM00342">
    <property type="entry name" value="HTH_ARAC"/>
    <property type="match status" value="1"/>
</dbReference>
<dbReference type="SUPFAM" id="SSF46689">
    <property type="entry name" value="Homeodomain-like"/>
    <property type="match status" value="2"/>
</dbReference>
<dbReference type="SUPFAM" id="SSF51215">
    <property type="entry name" value="Regulatory protein AraC"/>
    <property type="match status" value="1"/>
</dbReference>
<dbReference type="PROSITE" id="PS00041">
    <property type="entry name" value="HTH_ARAC_FAMILY_1"/>
    <property type="match status" value="1"/>
</dbReference>
<dbReference type="PROSITE" id="PS01124">
    <property type="entry name" value="HTH_ARAC_FAMILY_2"/>
    <property type="match status" value="1"/>
</dbReference>
<gene>
    <name type="primary">rafR</name>
</gene>
<name>RAFR_PEDPE</name>
<proteinExistence type="predicted"/>
<protein>
    <recommendedName>
        <fullName>Raffinose operon transcriptional regulatory protein RafR</fullName>
    </recommendedName>
</protein>
<sequence length="277" mass="31532">MNGEYKTLANKSFESNVLFFGQEACLPNYTYKGNNVRDSYVIHYIQEGKGTFAAANHPATVLKAGDIFILPKGTPCFYQADNDQPWKYFWIGFSAGIRIEAMLSGSLLAQKCYLRQVQNGHIYADLSELYKVLHIPNSLINDVLLGSLIYRLFYDLLRWYPADATNIKVKSTEQFNLAVSYLQENYSTGCTIMDLCHYLNLSRSYLYTLFKTHANTSPQKLLTKLRLEDAKQRLSTSNNSVQSIANMVGYKDSFTFSKAFKRYSGASPSYYRKSIGI</sequence>
<reference key="1">
    <citation type="submission" date="1994-04" db="EMBL/GenBank/DDBJ databases">
        <title>The sucrose and raffinose operons of Pediococcus pentosaceus PPE1.0.</title>
        <authorList>
            <person name="Leenhouts K.K.J."/>
            <person name="Bolhuis A.A."/>
            <person name="Kok J.J."/>
            <person name="Venema G.G."/>
        </authorList>
    </citation>
    <scope>NUCLEOTIDE SEQUENCE [GENOMIC DNA]</scope>
    <source>
        <strain>PPE1.0</strain>
    </source>
</reference>
<accession>P43465</accession>
<organism>
    <name type="scientific">Pediococcus pentosaceus</name>
    <dbReference type="NCBI Taxonomy" id="1255"/>
    <lineage>
        <taxon>Bacteria</taxon>
        <taxon>Bacillati</taxon>
        <taxon>Bacillota</taxon>
        <taxon>Bacilli</taxon>
        <taxon>Lactobacillales</taxon>
        <taxon>Lactobacillaceae</taxon>
        <taxon>Pediococcus</taxon>
    </lineage>
</organism>
<evidence type="ECO:0000255" key="1">
    <source>
        <dbReference type="PROSITE-ProRule" id="PRU00593"/>
    </source>
</evidence>
<keyword id="KW-0010">Activator</keyword>
<keyword id="KW-0238">DNA-binding</keyword>
<keyword id="KW-0804">Transcription</keyword>
<keyword id="KW-0805">Transcription regulation</keyword>